<proteinExistence type="inferred from homology"/>
<evidence type="ECO:0000250" key="1"/>
<evidence type="ECO:0000255" key="2"/>
<evidence type="ECO:0000305" key="3"/>
<comment type="function">
    <text evidence="1">Core subunit of the mitochondrial membrane respiratory chain NADH dehydrogenase (Complex I) that is believed to belong to the minimal assembly required for catalysis. Complex I functions in the transfer of electrons from NADH to the respiratory chain. The immediate electron acceptor for the enzyme is believed to be ubiquinone (By similarity).</text>
</comment>
<comment type="catalytic activity">
    <reaction>
        <text>a ubiquinone + NADH + 5 H(+)(in) = a ubiquinol + NAD(+) + 4 H(+)(out)</text>
        <dbReference type="Rhea" id="RHEA:29091"/>
        <dbReference type="Rhea" id="RHEA-COMP:9565"/>
        <dbReference type="Rhea" id="RHEA-COMP:9566"/>
        <dbReference type="ChEBI" id="CHEBI:15378"/>
        <dbReference type="ChEBI" id="CHEBI:16389"/>
        <dbReference type="ChEBI" id="CHEBI:17976"/>
        <dbReference type="ChEBI" id="CHEBI:57540"/>
        <dbReference type="ChEBI" id="CHEBI:57945"/>
        <dbReference type="EC" id="7.1.1.2"/>
    </reaction>
</comment>
<comment type="subcellular location">
    <subcellularLocation>
        <location evidence="1">Mitochondrion inner membrane</location>
        <topology evidence="1">Multi-pass membrane protein</topology>
    </subcellularLocation>
</comment>
<comment type="similarity">
    <text evidence="3">Belongs to the complex I subunit 1 family.</text>
</comment>
<organism>
    <name type="scientific">Branchiostoma lanceolatum</name>
    <name type="common">Common lancelet</name>
    <name type="synonym">Amphioxus lanceolatum</name>
    <dbReference type="NCBI Taxonomy" id="7740"/>
    <lineage>
        <taxon>Eukaryota</taxon>
        <taxon>Metazoa</taxon>
        <taxon>Chordata</taxon>
        <taxon>Cephalochordata</taxon>
        <taxon>Leptocardii</taxon>
        <taxon>Amphioxiformes</taxon>
        <taxon>Branchiostomatidae</taxon>
        <taxon>Branchiostoma</taxon>
    </lineage>
</organism>
<gene>
    <name type="primary">ND1</name>
    <name type="synonym">NAD1</name>
    <name type="synonym">NADH1</name>
</gene>
<keyword id="KW-0249">Electron transport</keyword>
<keyword id="KW-0472">Membrane</keyword>
<keyword id="KW-0496">Mitochondrion</keyword>
<keyword id="KW-0999">Mitochondrion inner membrane</keyword>
<keyword id="KW-0520">NAD</keyword>
<keyword id="KW-0679">Respiratory chain</keyword>
<keyword id="KW-1278">Translocase</keyword>
<keyword id="KW-0812">Transmembrane</keyword>
<keyword id="KW-1133">Transmembrane helix</keyword>
<keyword id="KW-0813">Transport</keyword>
<keyword id="KW-0830">Ubiquinone</keyword>
<name>NU1M_BRALA</name>
<dbReference type="EC" id="7.1.1.2"/>
<dbReference type="EMBL" id="Y09524">
    <property type="protein sequence ID" value="CAA70708.1"/>
    <property type="molecule type" value="Genomic_DNA"/>
</dbReference>
<dbReference type="EMBL" id="Y16474">
    <property type="protein sequence ID" value="CAA76247.1"/>
    <property type="molecule type" value="Genomic_DNA"/>
</dbReference>
<dbReference type="PIR" id="B71390">
    <property type="entry name" value="B71390"/>
</dbReference>
<dbReference type="RefSeq" id="NP_007537.1">
    <property type="nucleotide sequence ID" value="NC_001912.1"/>
</dbReference>
<dbReference type="SMR" id="P69235"/>
<dbReference type="GeneID" id="808212"/>
<dbReference type="CTD" id="4535"/>
<dbReference type="GO" id="GO:0005743">
    <property type="term" value="C:mitochondrial inner membrane"/>
    <property type="evidence" value="ECO:0007669"/>
    <property type="project" value="UniProtKB-SubCell"/>
</dbReference>
<dbReference type="GO" id="GO:0008137">
    <property type="term" value="F:NADH dehydrogenase (ubiquinone) activity"/>
    <property type="evidence" value="ECO:0007669"/>
    <property type="project" value="UniProtKB-EC"/>
</dbReference>
<dbReference type="GO" id="GO:0009060">
    <property type="term" value="P:aerobic respiration"/>
    <property type="evidence" value="ECO:0007669"/>
    <property type="project" value="TreeGrafter"/>
</dbReference>
<dbReference type="HAMAP" id="MF_01350">
    <property type="entry name" value="NDH1_NuoH"/>
    <property type="match status" value="1"/>
</dbReference>
<dbReference type="InterPro" id="IPR001694">
    <property type="entry name" value="NADH_UbQ_OxRdtase_su1/FPO"/>
</dbReference>
<dbReference type="InterPro" id="IPR018086">
    <property type="entry name" value="NADH_UbQ_OxRdtase_su1_CS"/>
</dbReference>
<dbReference type="PANTHER" id="PTHR11432">
    <property type="entry name" value="NADH DEHYDROGENASE SUBUNIT 1"/>
    <property type="match status" value="1"/>
</dbReference>
<dbReference type="PANTHER" id="PTHR11432:SF3">
    <property type="entry name" value="NADH-UBIQUINONE OXIDOREDUCTASE CHAIN 1"/>
    <property type="match status" value="1"/>
</dbReference>
<dbReference type="Pfam" id="PF00146">
    <property type="entry name" value="NADHdh"/>
    <property type="match status" value="1"/>
</dbReference>
<dbReference type="PROSITE" id="PS00667">
    <property type="entry name" value="COMPLEX1_ND1_1"/>
    <property type="match status" value="1"/>
</dbReference>
<dbReference type="PROSITE" id="PS00668">
    <property type="entry name" value="COMPLEX1_ND1_2"/>
    <property type="match status" value="1"/>
</dbReference>
<feature type="chain" id="PRO_0000117356" description="NADH-ubiquinone oxidoreductase chain 1">
    <location>
        <begin position="1"/>
        <end position="313"/>
    </location>
</feature>
<feature type="transmembrane region" description="Helical" evidence="2">
    <location>
        <begin position="2"/>
        <end position="22"/>
    </location>
</feature>
<feature type="transmembrane region" description="Helical" evidence="2">
    <location>
        <begin position="72"/>
        <end position="92"/>
    </location>
</feature>
<feature type="transmembrane region" description="Helical" evidence="2">
    <location>
        <begin position="102"/>
        <end position="122"/>
    </location>
</feature>
<feature type="transmembrane region" description="Helical" evidence="2">
    <location>
        <begin position="148"/>
        <end position="168"/>
    </location>
</feature>
<feature type="transmembrane region" description="Helical" evidence="2">
    <location>
        <begin position="173"/>
        <end position="193"/>
    </location>
</feature>
<feature type="transmembrane region" description="Helical" evidence="2">
    <location>
        <begin position="222"/>
        <end position="244"/>
    </location>
</feature>
<feature type="transmembrane region" description="Helical" evidence="2">
    <location>
        <begin position="249"/>
        <end position="268"/>
    </location>
</feature>
<feature type="transmembrane region" description="Helical" evidence="2">
    <location>
        <begin position="293"/>
        <end position="313"/>
    </location>
</feature>
<feature type="sequence conflict" description="In Ref. 1; CAA70708." evidence="3" ref="1">
    <original>S</original>
    <variation>P</variation>
    <location>
        <position position="111"/>
    </location>
</feature>
<feature type="sequence conflict" description="In Ref. 1; CAA70708." evidence="3" ref="1">
    <original>R</original>
    <variation>S</variation>
    <location>
        <position position="274"/>
    </location>
</feature>
<reference key="1">
    <citation type="journal article" date="1997" name="Mol. Biol. Evol.">
        <title>The main features of the craniate mitochondrial DNA between the ND1 and the COI genes were established in the common ancestor with the lancelet.</title>
        <authorList>
            <person name="Delarbre C."/>
            <person name="Barriel V."/>
            <person name="Tillier S."/>
            <person name="Janvier P."/>
            <person name="Gachelin G."/>
        </authorList>
    </citation>
    <scope>NUCLEOTIDE SEQUENCE [GENOMIC DNA]</scope>
</reference>
<reference key="2">
    <citation type="journal article" date="1998" name="Nucleic Acids Res.">
        <title>Complete sequence of the amphioxus (Branchiostoma lanceolatum) mitochondrial genome: relations to vertebrates.</title>
        <authorList>
            <person name="Spruyt N."/>
            <person name="Delarbre C."/>
            <person name="Gachelin G."/>
            <person name="Laudet V."/>
        </authorList>
    </citation>
    <scope>NUCLEOTIDE SEQUENCE [GENOMIC DNA]</scope>
</reference>
<protein>
    <recommendedName>
        <fullName>NADH-ubiquinone oxidoreductase chain 1</fullName>
        <ecNumber>7.1.1.2</ecNumber>
    </recommendedName>
    <alternativeName>
        <fullName>NADH dehydrogenase subunit 1</fullName>
    </alternativeName>
</protein>
<accession>P69235</accession>
<accession>O21000</accession>
<accession>O47433</accession>
<sequence length="313" mass="34429">MILSVIHIFLYFVPVLLAVAFLTLTERKVIGYVQLRKGPNVVGPYGLLQPIADGVKLFIKEPIKPSSSNPSVFFFAPMLALILALLLWMPVPLMDAFIELNFAVLFVLAISSLSVYSIMASGWSSNSKYALLGALRAVAQMVSYEVSLGLIILSLICLVGGFNLAQFFSAQEEVMLMLSCWPLGIMWFISTVAETNRSPFDLTEGESELVSGFNVEYSGGPFALFFLAEYANILFMNVLSALLFLAAHFSLLGVAVKVGLLAGLYLWFRASYPRFRYDQLMHLAWKSFLPLSLGLLMLNFSLPLTFSGIGGGL</sequence>
<geneLocation type="mitochondrion"/>